<organism>
    <name type="scientific">Clostridium perfringens (strain ATCC 13124 / DSM 756 / JCM 1290 / NCIMB 6125 / NCTC 8237 / Type A)</name>
    <dbReference type="NCBI Taxonomy" id="195103"/>
    <lineage>
        <taxon>Bacteria</taxon>
        <taxon>Bacillati</taxon>
        <taxon>Bacillota</taxon>
        <taxon>Clostridia</taxon>
        <taxon>Eubacteriales</taxon>
        <taxon>Clostridiaceae</taxon>
        <taxon>Clostridium</taxon>
    </lineage>
</organism>
<accession>Q0TV46</accession>
<gene>
    <name evidence="1" type="primary">addA</name>
    <name type="ordered locus">CPF_0025</name>
</gene>
<proteinExistence type="inferred from homology"/>
<reference key="1">
    <citation type="journal article" date="2006" name="Genome Res.">
        <title>Skewed genomic variability in strains of the toxigenic bacterial pathogen, Clostridium perfringens.</title>
        <authorList>
            <person name="Myers G.S.A."/>
            <person name="Rasko D.A."/>
            <person name="Cheung J.K."/>
            <person name="Ravel J."/>
            <person name="Seshadri R."/>
            <person name="DeBoy R.T."/>
            <person name="Ren Q."/>
            <person name="Varga J."/>
            <person name="Awad M.M."/>
            <person name="Brinkac L.M."/>
            <person name="Daugherty S.C."/>
            <person name="Haft D.H."/>
            <person name="Dodson R.J."/>
            <person name="Madupu R."/>
            <person name="Nelson W.C."/>
            <person name="Rosovitz M.J."/>
            <person name="Sullivan S.A."/>
            <person name="Khouri H."/>
            <person name="Dimitrov G.I."/>
            <person name="Watkins K.L."/>
            <person name="Mulligan S."/>
            <person name="Benton J."/>
            <person name="Radune D."/>
            <person name="Fisher D.J."/>
            <person name="Atkins H.S."/>
            <person name="Hiscox T."/>
            <person name="Jost B.H."/>
            <person name="Billington S.J."/>
            <person name="Songer J.G."/>
            <person name="McClane B.A."/>
            <person name="Titball R.W."/>
            <person name="Rood J.I."/>
            <person name="Melville S.B."/>
            <person name="Paulsen I.T."/>
        </authorList>
    </citation>
    <scope>NUCLEOTIDE SEQUENCE [LARGE SCALE GENOMIC DNA]</scope>
    <source>
        <strain>ATCC 13124 / DSM 756 / JCM 1290 / NCIMB 6125 / NCTC 8237 / S 107 / Type A</strain>
    </source>
</reference>
<comment type="function">
    <text evidence="1">The heterodimer acts as both an ATP-dependent DNA helicase and an ATP-dependent, dual-direction single-stranded exonuclease. Recognizes the chi site generating a DNA molecule suitable for the initiation of homologous recombination. The AddA nuclease domain is required for chi fragment generation; this subunit has the helicase and 3' -&gt; 5' nuclease activities.</text>
</comment>
<comment type="catalytic activity">
    <reaction evidence="1">
        <text>Couples ATP hydrolysis with the unwinding of duplex DNA by translocating in the 3'-5' direction.</text>
        <dbReference type="EC" id="5.6.2.4"/>
    </reaction>
</comment>
<comment type="catalytic activity">
    <reaction evidence="1">
        <text>ATP + H2O = ADP + phosphate + H(+)</text>
        <dbReference type="Rhea" id="RHEA:13065"/>
        <dbReference type="ChEBI" id="CHEBI:15377"/>
        <dbReference type="ChEBI" id="CHEBI:15378"/>
        <dbReference type="ChEBI" id="CHEBI:30616"/>
        <dbReference type="ChEBI" id="CHEBI:43474"/>
        <dbReference type="ChEBI" id="CHEBI:456216"/>
        <dbReference type="EC" id="5.6.2.4"/>
    </reaction>
</comment>
<comment type="cofactor">
    <cofactor evidence="1">
        <name>Mg(2+)</name>
        <dbReference type="ChEBI" id="CHEBI:18420"/>
    </cofactor>
</comment>
<comment type="subunit">
    <text evidence="1">Heterodimer of AddA and AddB/RexB.</text>
</comment>
<comment type="similarity">
    <text evidence="1">Belongs to the helicase family. AddA subfamily.</text>
</comment>
<dbReference type="EC" id="3.1.-.-" evidence="1"/>
<dbReference type="EC" id="5.6.2.4" evidence="1"/>
<dbReference type="EMBL" id="CP000246">
    <property type="protein sequence ID" value="ABG82931.1"/>
    <property type="molecule type" value="Genomic_DNA"/>
</dbReference>
<dbReference type="RefSeq" id="WP_011590031.1">
    <property type="nucleotide sequence ID" value="NC_008261.1"/>
</dbReference>
<dbReference type="SMR" id="Q0TV46"/>
<dbReference type="STRING" id="195103.CPF_0025"/>
<dbReference type="PaxDb" id="195103-CPF_0025"/>
<dbReference type="KEGG" id="cpf:CPF_0025"/>
<dbReference type="eggNOG" id="COG1074">
    <property type="taxonomic scope" value="Bacteria"/>
</dbReference>
<dbReference type="HOGENOM" id="CLU_001114_3_1_9"/>
<dbReference type="Proteomes" id="UP000001823">
    <property type="component" value="Chromosome"/>
</dbReference>
<dbReference type="GO" id="GO:0005829">
    <property type="term" value="C:cytosol"/>
    <property type="evidence" value="ECO:0007669"/>
    <property type="project" value="TreeGrafter"/>
</dbReference>
<dbReference type="GO" id="GO:0033202">
    <property type="term" value="C:DNA helicase complex"/>
    <property type="evidence" value="ECO:0007669"/>
    <property type="project" value="TreeGrafter"/>
</dbReference>
<dbReference type="GO" id="GO:0043138">
    <property type="term" value="F:3'-5' DNA helicase activity"/>
    <property type="evidence" value="ECO:0007669"/>
    <property type="project" value="UniProtKB-UniRule"/>
</dbReference>
<dbReference type="GO" id="GO:0008408">
    <property type="term" value="F:3'-5' exonuclease activity"/>
    <property type="evidence" value="ECO:0007669"/>
    <property type="project" value="UniProtKB-UniRule"/>
</dbReference>
<dbReference type="GO" id="GO:0005524">
    <property type="term" value="F:ATP binding"/>
    <property type="evidence" value="ECO:0007669"/>
    <property type="project" value="UniProtKB-UniRule"/>
</dbReference>
<dbReference type="GO" id="GO:0016887">
    <property type="term" value="F:ATP hydrolysis activity"/>
    <property type="evidence" value="ECO:0007669"/>
    <property type="project" value="RHEA"/>
</dbReference>
<dbReference type="GO" id="GO:0003690">
    <property type="term" value="F:double-stranded DNA binding"/>
    <property type="evidence" value="ECO:0007669"/>
    <property type="project" value="UniProtKB-UniRule"/>
</dbReference>
<dbReference type="GO" id="GO:0000724">
    <property type="term" value="P:double-strand break repair via homologous recombination"/>
    <property type="evidence" value="ECO:0007669"/>
    <property type="project" value="UniProtKB-UniRule"/>
</dbReference>
<dbReference type="CDD" id="cd17932">
    <property type="entry name" value="DEXQc_UvrD"/>
    <property type="match status" value="1"/>
</dbReference>
<dbReference type="FunFam" id="3.40.50.300:FF:001236">
    <property type="entry name" value="ATP-dependent helicase/nuclease subunit A"/>
    <property type="match status" value="1"/>
</dbReference>
<dbReference type="Gene3D" id="3.90.320.10">
    <property type="match status" value="1"/>
</dbReference>
<dbReference type="Gene3D" id="3.40.50.300">
    <property type="entry name" value="P-loop containing nucleotide triphosphate hydrolases"/>
    <property type="match status" value="4"/>
</dbReference>
<dbReference type="HAMAP" id="MF_01451">
    <property type="entry name" value="AddA"/>
    <property type="match status" value="1"/>
</dbReference>
<dbReference type="InterPro" id="IPR014152">
    <property type="entry name" value="AddA"/>
</dbReference>
<dbReference type="InterPro" id="IPR014017">
    <property type="entry name" value="DNA_helicase_UvrD-like_C"/>
</dbReference>
<dbReference type="InterPro" id="IPR000212">
    <property type="entry name" value="DNA_helicase_UvrD/REP"/>
</dbReference>
<dbReference type="InterPro" id="IPR027417">
    <property type="entry name" value="P-loop_NTPase"/>
</dbReference>
<dbReference type="InterPro" id="IPR011604">
    <property type="entry name" value="PDDEXK-like_dom_sf"/>
</dbReference>
<dbReference type="InterPro" id="IPR038726">
    <property type="entry name" value="PDDEXK_AddAB-type"/>
</dbReference>
<dbReference type="InterPro" id="IPR011335">
    <property type="entry name" value="Restrct_endonuc-II-like"/>
</dbReference>
<dbReference type="InterPro" id="IPR014016">
    <property type="entry name" value="UvrD-like_ATP-bd"/>
</dbReference>
<dbReference type="NCBIfam" id="TIGR02785">
    <property type="entry name" value="addA_Gpos"/>
    <property type="match status" value="1"/>
</dbReference>
<dbReference type="PANTHER" id="PTHR11070:SF48">
    <property type="entry name" value="ATP-DEPENDENT HELICASE_NUCLEASE SUBUNIT A"/>
    <property type="match status" value="1"/>
</dbReference>
<dbReference type="PANTHER" id="PTHR11070">
    <property type="entry name" value="UVRD / RECB / PCRA DNA HELICASE FAMILY MEMBER"/>
    <property type="match status" value="1"/>
</dbReference>
<dbReference type="Pfam" id="PF12705">
    <property type="entry name" value="PDDEXK_1"/>
    <property type="match status" value="1"/>
</dbReference>
<dbReference type="Pfam" id="PF00580">
    <property type="entry name" value="UvrD-helicase"/>
    <property type="match status" value="1"/>
</dbReference>
<dbReference type="Pfam" id="PF13361">
    <property type="entry name" value="UvrD_C"/>
    <property type="match status" value="1"/>
</dbReference>
<dbReference type="SUPFAM" id="SSF52540">
    <property type="entry name" value="P-loop containing nucleoside triphosphate hydrolases"/>
    <property type="match status" value="1"/>
</dbReference>
<dbReference type="SUPFAM" id="SSF52980">
    <property type="entry name" value="Restriction endonuclease-like"/>
    <property type="match status" value="1"/>
</dbReference>
<dbReference type="PROSITE" id="PS51198">
    <property type="entry name" value="UVRD_HELICASE_ATP_BIND"/>
    <property type="match status" value="1"/>
</dbReference>
<dbReference type="PROSITE" id="PS51217">
    <property type="entry name" value="UVRD_HELICASE_CTER"/>
    <property type="match status" value="1"/>
</dbReference>
<evidence type="ECO:0000255" key="1">
    <source>
        <dbReference type="HAMAP-Rule" id="MF_01451"/>
    </source>
</evidence>
<keyword id="KW-0067">ATP-binding</keyword>
<keyword id="KW-0227">DNA damage</keyword>
<keyword id="KW-0234">DNA repair</keyword>
<keyword id="KW-0238">DNA-binding</keyword>
<keyword id="KW-0269">Exonuclease</keyword>
<keyword id="KW-0347">Helicase</keyword>
<keyword id="KW-0378">Hydrolase</keyword>
<keyword id="KW-0413">Isomerase</keyword>
<keyword id="KW-0540">Nuclease</keyword>
<keyword id="KW-0547">Nucleotide-binding</keyword>
<protein>
    <recommendedName>
        <fullName evidence="1">ATP-dependent helicase/nuclease subunit A</fullName>
        <ecNumber evidence="1">3.1.-.-</ecNumber>
        <ecNumber evidence="1">5.6.2.4</ecNumber>
    </recommendedName>
    <alternativeName>
        <fullName evidence="1">ATP-dependent helicase/nuclease AddA</fullName>
    </alternativeName>
    <alternativeName>
        <fullName evidence="1">DNA 3'-5' helicase AddA</fullName>
    </alternativeName>
</protein>
<sequence length="1271" mass="147384">MGTKWTEEQELAINTRKCNLLVAAAAGSGKTAVLVERIIKMITEGENPVDIDKLLVVTFTNAAASEMRERIGDAISKALEKDPSSEALQRQLALLNRASITTMHSFCLEVIKNNFHLIDLDPGFRIGDQTECELIKQDILADLFEDMYAKDDECFKDLVEAYGGSKSDDNLNSIILKFYNFIMSGPWPETWLKDKVEEFNINSIEELEGKKWIEVLKESIILDLNNAYSMLTQARDIAEMGGGLEPYLVNIYPEIIQVEELRIALSEGIVKFYNKLMGASFGRLKSVRKASVDDERALEKAKSLRDESKKIIENLRDNVFETSLEEAVLGMKKMYPLMKCLSGLVIEFSNRYRDKKREKDILDFNDLEHLCLEILIDKDEEGNIKPSQVALEFKDKFEEVLVDEYQDSNTIQETIVGMVSRRDVENPNVFMVGDVKQSIYKFRQANPELFLEKYINYREFEDSNRKIMLYKNFRSREEIINGVNYIFKTLMSNTVGELEYDEKEALNLGASYGELNEENVEKEYIDEIENLKVAGDIELNILNKAGNKEYRDDDELGEEEEDLDSIQLEARIIGKKIKELMNPEDGSHYMVFDKDLGKYRRIKYKDIVILLRATKNWAETFVDELGTYGIPVYADTGTGYFQTIEIRTILALLHIIDNPMQDIYILSALRSPIFSFTSEEFADLRLLNKDKYFFEIIKEVVDGIYDESISKELKGKCKYFLDYLNKWREKAAYMPIDEFIWFLYSDTSYYGYVGTMPNGVQRQANLRILFQRAKQYESTSFKGLFNFINFINKLKKSSGDMGSAKILGENENVVRIMSIHKSKGLEFPVVILGGTGKQFNKMDLREDILLHETLGIGTNCIDVKKRIKYDTLQKHAIKKKCELEVLSEEMRILYVAFTRAKEKLIITGAVSDLEKSCENWCKASASSGDNRINPGNVLKGKSYLDWICMALTKHKDGDAIRNIGNGDITLNLDDKSNWSFKSWDRSELLETNNNKKEKNNIDIFESNNWIESKKDIKEVIEIRDRLGFKYKYIESCNTPSNISVTELKRAHQEEEFMQESYNIIDNESNEENKKEKIKRKPRFMEERQEEFSAAKKGTITHFVMQHIDLDKVTYIDEIREEVLKMVKKELLTEEEGKVVNVFKIQKFFKSDLGQRMLNSYKSGKKVYRELPFITEIPSSIIEKNLDPKIYGEEKVRLQGIIDAFFEEEDGYVLLDYKTDYVKEGEEEDFINKYKIQINLYKDTLNKILGEEVKEAYLYSFYLEKELKISKE</sequence>
<feature type="chain" id="PRO_0000379262" description="ATP-dependent helicase/nuclease subunit A">
    <location>
        <begin position="1"/>
        <end position="1271"/>
    </location>
</feature>
<feature type="domain" description="UvrD-like helicase ATP-binding" evidence="1">
    <location>
        <begin position="3"/>
        <end position="476"/>
    </location>
</feature>
<feature type="domain" description="UvrD-like helicase C-terminal" evidence="1">
    <location>
        <begin position="528"/>
        <end position="824"/>
    </location>
</feature>
<feature type="binding site" evidence="1">
    <location>
        <begin position="24"/>
        <end position="31"/>
    </location>
    <ligand>
        <name>ATP</name>
        <dbReference type="ChEBI" id="CHEBI:30616"/>
    </ligand>
</feature>
<name>ADDA_CLOP1</name>